<evidence type="ECO:0000250" key="1"/>
<evidence type="ECO:0000250" key="2">
    <source>
        <dbReference type="UniProtKB" id="Q30201"/>
    </source>
</evidence>
<evidence type="ECO:0000255" key="3"/>
<evidence type="ECO:0000255" key="4">
    <source>
        <dbReference type="PROSITE-ProRule" id="PRU00114"/>
    </source>
</evidence>
<evidence type="ECO:0000305" key="5"/>
<proteinExistence type="evidence at transcript level"/>
<sequence>MGPRARPALFFLILLRTVAAQGRPPRSHSLRYLFMGASERDHGLPLFEALGYVDDELFVAYNHESRRAESRAQWVLGEAHSQLWLQLSQSLKGWDHMFIVDFWTIMDNHNHSKESHTLQVILGCEVQEDNSTRGFWKYGYDGQDHLEFCPETLDWRAAESRALTTKLEWEVNKIRAKQNRAYLERDCPEQLQWLLELGRGVLDQQVPPLVKVTHHVASAVTTLRCQALNFYPQNITMRWLKDRKPVDVKDAESKDVLPSGDGTYQSWVALAVPPGEEQRYTCQVEHPGLDQPLTATWEPSLSNTLVTGVISGIAVCVIIFLIGILFRILRKRQASRGAMGDYVLAECE</sequence>
<gene>
    <name type="primary">HFE</name>
</gene>
<feature type="signal peptide" evidence="1">
    <location>
        <begin position="1"/>
        <end position="22"/>
    </location>
</feature>
<feature type="chain" id="PRO_0000018891" description="Hereditary hemochromatosis protein homolog">
    <location>
        <begin position="23"/>
        <end position="348"/>
    </location>
</feature>
<feature type="topological domain" description="Extracellular" evidence="2">
    <location>
        <begin position="23"/>
        <end position="306"/>
    </location>
</feature>
<feature type="transmembrane region" description="Helical" evidence="3">
    <location>
        <begin position="307"/>
        <end position="330"/>
    </location>
</feature>
<feature type="topological domain" description="Cytoplasmic" evidence="2">
    <location>
        <begin position="331"/>
        <end position="348"/>
    </location>
</feature>
<feature type="domain" description="Ig-like C1-type">
    <location>
        <begin position="207"/>
        <end position="296"/>
    </location>
</feature>
<feature type="region of interest" description="Alpha-1">
    <location>
        <begin position="23"/>
        <end position="114"/>
    </location>
</feature>
<feature type="region of interest" description="Alpha-2">
    <location>
        <begin position="115"/>
        <end position="205"/>
    </location>
</feature>
<feature type="region of interest" description="Alpha-3">
    <location>
        <begin position="206"/>
        <end position="297"/>
    </location>
</feature>
<feature type="region of interest" description="Connecting peptide">
    <location>
        <begin position="298"/>
        <end position="306"/>
    </location>
</feature>
<feature type="glycosylation site" description="N-linked (GlcNAc...) asparagine" evidence="3">
    <location>
        <position position="110"/>
    </location>
</feature>
<feature type="glycosylation site" description="N-linked (GlcNAc...) asparagine" evidence="3">
    <location>
        <position position="130"/>
    </location>
</feature>
<feature type="glycosylation site" description="N-linked (GlcNAc...) asparagine" evidence="3">
    <location>
        <position position="234"/>
    </location>
</feature>
<feature type="disulfide bond" evidence="4">
    <location>
        <begin position="124"/>
        <end position="187"/>
    </location>
</feature>
<feature type="disulfide bond" evidence="4">
    <location>
        <begin position="225"/>
        <end position="282"/>
    </location>
</feature>
<accession>Q9GL42</accession>
<dbReference type="EMBL" id="AY007543">
    <property type="protein sequence ID" value="AAG23703.1"/>
    <property type="molecule type" value="mRNA"/>
</dbReference>
<dbReference type="SMR" id="Q9GL42"/>
<dbReference type="GlyCosmos" id="Q9GL42">
    <property type="glycosylation" value="3 sites, No reported glycans"/>
</dbReference>
<dbReference type="GO" id="GO:0009897">
    <property type="term" value="C:external side of plasma membrane"/>
    <property type="evidence" value="ECO:0007669"/>
    <property type="project" value="TreeGrafter"/>
</dbReference>
<dbReference type="GO" id="GO:0005615">
    <property type="term" value="C:extracellular space"/>
    <property type="evidence" value="ECO:0007669"/>
    <property type="project" value="TreeGrafter"/>
</dbReference>
<dbReference type="GO" id="GO:1990459">
    <property type="term" value="F:transferrin receptor binding"/>
    <property type="evidence" value="ECO:0007669"/>
    <property type="project" value="TreeGrafter"/>
</dbReference>
<dbReference type="GO" id="GO:0006826">
    <property type="term" value="P:iron ion transport"/>
    <property type="evidence" value="ECO:0007669"/>
    <property type="project" value="UniProtKB-KW"/>
</dbReference>
<dbReference type="GO" id="GO:0034756">
    <property type="term" value="P:regulation of iron ion transport"/>
    <property type="evidence" value="ECO:0007669"/>
    <property type="project" value="TreeGrafter"/>
</dbReference>
<dbReference type="GO" id="GO:1990641">
    <property type="term" value="P:response to iron ion starvation"/>
    <property type="evidence" value="ECO:0007669"/>
    <property type="project" value="TreeGrafter"/>
</dbReference>
<dbReference type="FunFam" id="3.30.500.10:FF:000001">
    <property type="entry name" value="H-2 class I histocompatibility antigen, alpha chain"/>
    <property type="match status" value="1"/>
</dbReference>
<dbReference type="FunFam" id="2.60.40.10:FF:000204">
    <property type="entry name" value="Major histocompatibility complex, class I-related protein"/>
    <property type="match status" value="1"/>
</dbReference>
<dbReference type="Gene3D" id="2.60.40.10">
    <property type="entry name" value="Immunoglobulins"/>
    <property type="match status" value="1"/>
</dbReference>
<dbReference type="Gene3D" id="3.30.500.10">
    <property type="entry name" value="MHC class I-like antigen recognition-like"/>
    <property type="match status" value="1"/>
</dbReference>
<dbReference type="InterPro" id="IPR007110">
    <property type="entry name" value="Ig-like_dom"/>
</dbReference>
<dbReference type="InterPro" id="IPR036179">
    <property type="entry name" value="Ig-like_dom_sf"/>
</dbReference>
<dbReference type="InterPro" id="IPR013783">
    <property type="entry name" value="Ig-like_fold"/>
</dbReference>
<dbReference type="InterPro" id="IPR003006">
    <property type="entry name" value="Ig/MHC_CS"/>
</dbReference>
<dbReference type="InterPro" id="IPR003597">
    <property type="entry name" value="Ig_C1-set"/>
</dbReference>
<dbReference type="InterPro" id="IPR050208">
    <property type="entry name" value="MHC_class-I_related"/>
</dbReference>
<dbReference type="InterPro" id="IPR011161">
    <property type="entry name" value="MHC_I-like_Ag-recog"/>
</dbReference>
<dbReference type="InterPro" id="IPR037055">
    <property type="entry name" value="MHC_I-like_Ag-recog_sf"/>
</dbReference>
<dbReference type="InterPro" id="IPR011162">
    <property type="entry name" value="MHC_I/II-like_Ag-recog"/>
</dbReference>
<dbReference type="InterPro" id="IPR001039">
    <property type="entry name" value="MHC_I_a_a1/a2"/>
</dbReference>
<dbReference type="PANTHER" id="PTHR16675:SF172">
    <property type="entry name" value="HEREDITARY HEMOCHROMATOSIS PROTEIN"/>
    <property type="match status" value="1"/>
</dbReference>
<dbReference type="PANTHER" id="PTHR16675">
    <property type="entry name" value="MHC CLASS I-RELATED"/>
    <property type="match status" value="1"/>
</dbReference>
<dbReference type="Pfam" id="PF07654">
    <property type="entry name" value="C1-set"/>
    <property type="match status" value="1"/>
</dbReference>
<dbReference type="Pfam" id="PF00129">
    <property type="entry name" value="MHC_I"/>
    <property type="match status" value="1"/>
</dbReference>
<dbReference type="PRINTS" id="PR01638">
    <property type="entry name" value="MHCCLASSI"/>
</dbReference>
<dbReference type="SMART" id="SM00407">
    <property type="entry name" value="IGc1"/>
    <property type="match status" value="1"/>
</dbReference>
<dbReference type="SUPFAM" id="SSF48726">
    <property type="entry name" value="Immunoglobulin"/>
    <property type="match status" value="1"/>
</dbReference>
<dbReference type="SUPFAM" id="SSF54452">
    <property type="entry name" value="MHC antigen-recognition domain"/>
    <property type="match status" value="1"/>
</dbReference>
<dbReference type="PROSITE" id="PS50835">
    <property type="entry name" value="IG_LIKE"/>
    <property type="match status" value="1"/>
</dbReference>
<dbReference type="PROSITE" id="PS00290">
    <property type="entry name" value="IG_MHC"/>
    <property type="match status" value="1"/>
</dbReference>
<comment type="function">
    <text evidence="2">Binds to transferrin receptor (TFR) and reduces its affinity for iron-loaded transferrin.</text>
</comment>
<comment type="subunit">
    <text evidence="2">Binds TFR through the extracellular domain in a pH-dependent manner.</text>
</comment>
<comment type="subcellular location">
    <subcellularLocation>
        <location evidence="2">Cell membrane</location>
        <topology evidence="2">Single-pass type I membrane protein</topology>
    </subcellularLocation>
</comment>
<comment type="similarity">
    <text evidence="5">Belongs to the MHC class I family.</text>
</comment>
<organism>
    <name type="scientific">Dicerorhinus sumatrensis</name>
    <name type="common">Sumatran rhinoceros</name>
    <dbReference type="NCBI Taxonomy" id="89632"/>
    <lineage>
        <taxon>Eukaryota</taxon>
        <taxon>Metazoa</taxon>
        <taxon>Chordata</taxon>
        <taxon>Craniata</taxon>
        <taxon>Vertebrata</taxon>
        <taxon>Euteleostomi</taxon>
        <taxon>Mammalia</taxon>
        <taxon>Eutheria</taxon>
        <taxon>Laurasiatheria</taxon>
        <taxon>Perissodactyla</taxon>
        <taxon>Rhinocerotidae</taxon>
        <taxon>Dicerorhinus</taxon>
    </lineage>
</organism>
<reference key="1">
    <citation type="submission" date="2000-08" db="EMBL/GenBank/DDBJ databases">
        <title>Rhinoceros HFE polymorphisms.</title>
        <authorList>
            <person name="West C.J."/>
            <person name="Worley M."/>
            <person name="Beutler E."/>
        </authorList>
    </citation>
    <scope>NUCLEOTIDE SEQUENCE [MRNA]</scope>
</reference>
<protein>
    <recommendedName>
        <fullName>Hereditary hemochromatosis protein homolog</fullName>
    </recommendedName>
</protein>
<keyword id="KW-1003">Cell membrane</keyword>
<keyword id="KW-1015">Disulfide bond</keyword>
<keyword id="KW-0325">Glycoprotein</keyword>
<keyword id="KW-0406">Ion transport</keyword>
<keyword id="KW-0408">Iron</keyword>
<keyword id="KW-0410">Iron transport</keyword>
<keyword id="KW-0472">Membrane</keyword>
<keyword id="KW-0732">Signal</keyword>
<keyword id="KW-0812">Transmembrane</keyword>
<keyword id="KW-1133">Transmembrane helix</keyword>
<keyword id="KW-0813">Transport</keyword>
<name>HFE_DICSU</name>